<comment type="function">
    <text>This protein seems to be a 2Fe-2S ferredoxin.</text>
</comment>
<comment type="pathway">
    <text>Xenobiotic degradation; toluene degradation.</text>
</comment>
<comment type="subunit">
    <text>This dioxygenase system consists of four proteins: the two subunits of the hydroxylase component (todC1 and todC2), a ferredoxin (TodB) and a ferredoxin reductase (TodA).</text>
</comment>
<comment type="similarity">
    <text evidence="3">Belongs to the bacterial ring-hydroxylating dioxygenase ferredoxin component family.</text>
</comment>
<evidence type="ECO:0000255" key="1">
    <source>
        <dbReference type="PROSITE-ProRule" id="PRU00628"/>
    </source>
</evidence>
<evidence type="ECO:0000269" key="2">
    <source>
    </source>
</evidence>
<evidence type="ECO:0000305" key="3"/>
<evidence type="ECO:0007829" key="4">
    <source>
        <dbReference type="PDB" id="3DQY"/>
    </source>
</evidence>
<keyword id="KW-0001">2Fe-2S</keyword>
<keyword id="KW-0002">3D-structure</keyword>
<keyword id="KW-0058">Aromatic hydrocarbons catabolism</keyword>
<keyword id="KW-0903">Direct protein sequencing</keyword>
<keyword id="KW-0249">Electron transport</keyword>
<keyword id="KW-0408">Iron</keyword>
<keyword id="KW-0411">Iron-sulfur</keyword>
<keyword id="KW-0479">Metal-binding</keyword>
<keyword id="KW-0813">Transport</keyword>
<organism>
    <name type="scientific">Pseudomonas putida (strain ATCC 700007 / DSM 6899 / JCM 31910 / BCRC 17059 / LMG 24140 / F1)</name>
    <dbReference type="NCBI Taxonomy" id="351746"/>
    <lineage>
        <taxon>Bacteria</taxon>
        <taxon>Pseudomonadati</taxon>
        <taxon>Pseudomonadota</taxon>
        <taxon>Gammaproteobacteria</taxon>
        <taxon>Pseudomonadales</taxon>
        <taxon>Pseudomonadaceae</taxon>
        <taxon>Pseudomonas</taxon>
    </lineage>
</organism>
<name>TODB_PSEP1</name>
<sequence>MTWTYILRQGDLPPGEMQRYEGGPEPVMVCNVDGEFFAVQDTCTHGDWALSDGYLDGDIVECTLHFGKFCVRTGKVKALPACKPIKVFPIKVEGDEVHVDLDNGELK</sequence>
<gene>
    <name type="primary">todB</name>
    <name type="ordered locus">Pput_2879</name>
</gene>
<reference key="1">
    <citation type="journal article" date="1989" name="J. Biol. Chem.">
        <title>Toluene degradation by Pseudomonas putida F1. Nucleotide sequence of the todC1C2BADE genes and their expression in Escherichia coli.</title>
        <authorList>
            <person name="Zylstra G.J."/>
            <person name="Gibson D.T."/>
        </authorList>
    </citation>
    <scope>NUCLEOTIDE SEQUENCE [GENOMIC DNA]</scope>
    <scope>PROTEIN SEQUENCE OF 2-13</scope>
</reference>
<reference key="2">
    <citation type="submission" date="2007-05" db="EMBL/GenBank/DDBJ databases">
        <title>Complete sequence of Pseudomonas putida F1.</title>
        <authorList>
            <consortium name="US DOE Joint Genome Institute"/>
            <person name="Copeland A."/>
            <person name="Lucas S."/>
            <person name="Lapidus A."/>
            <person name="Barry K."/>
            <person name="Detter J.C."/>
            <person name="Glavina del Rio T."/>
            <person name="Hammon N."/>
            <person name="Israni S."/>
            <person name="Dalin E."/>
            <person name="Tice H."/>
            <person name="Pitluck S."/>
            <person name="Chain P."/>
            <person name="Malfatti S."/>
            <person name="Shin M."/>
            <person name="Vergez L."/>
            <person name="Schmutz J."/>
            <person name="Larimer F."/>
            <person name="Land M."/>
            <person name="Hauser L."/>
            <person name="Kyrpides N."/>
            <person name="Lykidis A."/>
            <person name="Parales R."/>
            <person name="Richardson P."/>
        </authorList>
    </citation>
    <scope>NUCLEOTIDE SEQUENCE [LARGE SCALE GENOMIC DNA]</scope>
    <source>
        <strain>ATCC 700007 / DSM 6899 / JCM 31910 / BCRC 17059 / LMG 24140 / F1</strain>
    </source>
</reference>
<dbReference type="EMBL" id="J04996">
    <property type="protein sequence ID" value="AAA26007.1"/>
    <property type="molecule type" value="Genomic_DNA"/>
</dbReference>
<dbReference type="EMBL" id="CP000712">
    <property type="protein sequence ID" value="ABQ79010.1"/>
    <property type="molecule type" value="Genomic_DNA"/>
</dbReference>
<dbReference type="PIR" id="C36516">
    <property type="entry name" value="C36516"/>
</dbReference>
<dbReference type="PDB" id="3DQY">
    <property type="method" value="X-ray"/>
    <property type="resolution" value="1.20 A"/>
    <property type="chains" value="A=2-107"/>
</dbReference>
<dbReference type="PDB" id="4EMJ">
    <property type="method" value="X-ray"/>
    <property type="resolution" value="2.40 A"/>
    <property type="chains" value="B=1-107"/>
</dbReference>
<dbReference type="PDBsum" id="3DQY"/>
<dbReference type="PDBsum" id="4EMJ"/>
<dbReference type="SMR" id="A5W4F0"/>
<dbReference type="KEGG" id="ppf:Pput_2879"/>
<dbReference type="eggNOG" id="COG2146">
    <property type="taxonomic scope" value="Bacteria"/>
</dbReference>
<dbReference type="HOGENOM" id="CLU_055690_5_2_6"/>
<dbReference type="BioCyc" id="MetaCyc:MONOMER-11351"/>
<dbReference type="UniPathway" id="UPA00273"/>
<dbReference type="EvolutionaryTrace" id="A5W4F0"/>
<dbReference type="GO" id="GO:0051537">
    <property type="term" value="F:2 iron, 2 sulfur cluster binding"/>
    <property type="evidence" value="ECO:0007669"/>
    <property type="project" value="UniProtKB-KW"/>
</dbReference>
<dbReference type="GO" id="GO:0046872">
    <property type="term" value="F:metal ion binding"/>
    <property type="evidence" value="ECO:0007669"/>
    <property type="project" value="UniProtKB-KW"/>
</dbReference>
<dbReference type="GO" id="GO:0042203">
    <property type="term" value="P:toluene catabolic process"/>
    <property type="evidence" value="ECO:0007669"/>
    <property type="project" value="UniProtKB-UniPathway"/>
</dbReference>
<dbReference type="CDD" id="cd03528">
    <property type="entry name" value="Rieske_RO_ferredoxin"/>
    <property type="match status" value="1"/>
</dbReference>
<dbReference type="Gene3D" id="2.102.10.10">
    <property type="entry name" value="Rieske [2Fe-2S] iron-sulphur domain"/>
    <property type="match status" value="1"/>
</dbReference>
<dbReference type="InterPro" id="IPR017941">
    <property type="entry name" value="Rieske_2Fe-2S"/>
</dbReference>
<dbReference type="InterPro" id="IPR036922">
    <property type="entry name" value="Rieske_2Fe-2S_sf"/>
</dbReference>
<dbReference type="PANTHER" id="PTHR21496:SF23">
    <property type="entry name" value="3-PHENYLPROPIONATE_CINNAMIC ACID DIOXYGENASE FERREDOXIN SUBUNIT"/>
    <property type="match status" value="1"/>
</dbReference>
<dbReference type="PANTHER" id="PTHR21496">
    <property type="entry name" value="FERREDOXIN-RELATED"/>
    <property type="match status" value="1"/>
</dbReference>
<dbReference type="Pfam" id="PF00355">
    <property type="entry name" value="Rieske"/>
    <property type="match status" value="1"/>
</dbReference>
<dbReference type="SUPFAM" id="SSF50022">
    <property type="entry name" value="ISP domain"/>
    <property type="match status" value="1"/>
</dbReference>
<dbReference type="PROSITE" id="PS51296">
    <property type="entry name" value="RIESKE"/>
    <property type="match status" value="1"/>
</dbReference>
<accession>A5W4F0</accession>
<accession>P13370</accession>
<proteinExistence type="evidence at protein level"/>
<feature type="initiator methionine" description="Removed" evidence="2">
    <location>
        <position position="1"/>
    </location>
</feature>
<feature type="chain" id="PRO_0000314467" description="Toluene 1,2-dioxygenase system ferredoxin subunit">
    <location>
        <begin position="2"/>
        <end position="107"/>
    </location>
</feature>
<feature type="domain" description="Rieske" evidence="1">
    <location>
        <begin position="4"/>
        <end position="99"/>
    </location>
</feature>
<feature type="binding site" evidence="1">
    <location>
        <position position="43"/>
    </location>
    <ligand>
        <name>[2Fe-2S] cluster</name>
        <dbReference type="ChEBI" id="CHEBI:190135"/>
    </ligand>
</feature>
<feature type="binding site" evidence="1">
    <location>
        <position position="45"/>
    </location>
    <ligand>
        <name>[2Fe-2S] cluster</name>
        <dbReference type="ChEBI" id="CHEBI:190135"/>
    </ligand>
</feature>
<feature type="binding site" evidence="1">
    <location>
        <position position="62"/>
    </location>
    <ligand>
        <name>[2Fe-2S] cluster</name>
        <dbReference type="ChEBI" id="CHEBI:190135"/>
    </ligand>
</feature>
<feature type="binding site" evidence="1">
    <location>
        <position position="65"/>
    </location>
    <ligand>
        <name>[2Fe-2S] cluster</name>
        <dbReference type="ChEBI" id="CHEBI:190135"/>
    </ligand>
</feature>
<feature type="strand" evidence="4">
    <location>
        <begin position="4"/>
        <end position="8"/>
    </location>
</feature>
<feature type="helix" evidence="4">
    <location>
        <begin position="9"/>
        <end position="11"/>
    </location>
</feature>
<feature type="strand" evidence="4">
    <location>
        <begin position="17"/>
        <end position="20"/>
    </location>
</feature>
<feature type="strand" evidence="4">
    <location>
        <begin position="23"/>
        <end position="25"/>
    </location>
</feature>
<feature type="strand" evidence="4">
    <location>
        <begin position="27"/>
        <end position="32"/>
    </location>
</feature>
<feature type="strand" evidence="4">
    <location>
        <begin position="35"/>
        <end position="42"/>
    </location>
</feature>
<feature type="strand" evidence="4">
    <location>
        <begin position="44"/>
        <end position="47"/>
    </location>
</feature>
<feature type="helix" evidence="4">
    <location>
        <begin position="50"/>
        <end position="52"/>
    </location>
</feature>
<feature type="strand" evidence="4">
    <location>
        <begin position="53"/>
        <end position="56"/>
    </location>
</feature>
<feature type="strand" evidence="4">
    <location>
        <begin position="59"/>
        <end position="61"/>
    </location>
</feature>
<feature type="turn" evidence="4">
    <location>
        <begin position="63"/>
        <end position="65"/>
    </location>
</feature>
<feature type="strand" evidence="4">
    <location>
        <begin position="68"/>
        <end position="70"/>
    </location>
</feature>
<feature type="turn" evidence="4">
    <location>
        <begin position="71"/>
        <end position="73"/>
    </location>
</feature>
<feature type="strand" evidence="4">
    <location>
        <begin position="76"/>
        <end position="78"/>
    </location>
</feature>
<feature type="strand" evidence="4">
    <location>
        <begin position="90"/>
        <end position="93"/>
    </location>
</feature>
<feature type="strand" evidence="4">
    <location>
        <begin position="96"/>
        <end position="99"/>
    </location>
</feature>
<feature type="helix" evidence="4">
    <location>
        <begin position="101"/>
        <end position="103"/>
    </location>
</feature>
<protein>
    <recommendedName>
        <fullName>Toluene 1,2-dioxygenase system ferredoxin subunit</fullName>
    </recommendedName>
</protein>